<protein>
    <recommendedName>
        <fullName evidence="1">NAD kinase</fullName>
        <ecNumber evidence="1">2.7.1.23</ecNumber>
    </recommendedName>
    <alternativeName>
        <fullName evidence="1">ATP-dependent NAD kinase</fullName>
    </alternativeName>
</protein>
<organism>
    <name type="scientific">Legionella pneumophila subsp. pneumophila (strain Philadelphia 1 / ATCC 33152 / DSM 7513)</name>
    <dbReference type="NCBI Taxonomy" id="272624"/>
    <lineage>
        <taxon>Bacteria</taxon>
        <taxon>Pseudomonadati</taxon>
        <taxon>Pseudomonadota</taxon>
        <taxon>Gammaproteobacteria</taxon>
        <taxon>Legionellales</taxon>
        <taxon>Legionellaceae</taxon>
        <taxon>Legionella</taxon>
    </lineage>
</organism>
<accession>Q5ZRQ7</accession>
<comment type="function">
    <text evidence="1">Involved in the regulation of the intracellular balance of NAD and NADP, and is a key enzyme in the biosynthesis of NADP. Catalyzes specifically the phosphorylation on 2'-hydroxyl of the adenosine moiety of NAD to yield NADP.</text>
</comment>
<comment type="catalytic activity">
    <reaction evidence="1">
        <text>NAD(+) + ATP = ADP + NADP(+) + H(+)</text>
        <dbReference type="Rhea" id="RHEA:18629"/>
        <dbReference type="ChEBI" id="CHEBI:15378"/>
        <dbReference type="ChEBI" id="CHEBI:30616"/>
        <dbReference type="ChEBI" id="CHEBI:57540"/>
        <dbReference type="ChEBI" id="CHEBI:58349"/>
        <dbReference type="ChEBI" id="CHEBI:456216"/>
        <dbReference type="EC" id="2.7.1.23"/>
    </reaction>
</comment>
<comment type="cofactor">
    <cofactor evidence="1">
        <name>a divalent metal cation</name>
        <dbReference type="ChEBI" id="CHEBI:60240"/>
    </cofactor>
</comment>
<comment type="subcellular location">
    <subcellularLocation>
        <location evidence="1">Cytoplasm</location>
    </subcellularLocation>
</comment>
<comment type="similarity">
    <text evidence="1">Belongs to the NAD kinase family.</text>
</comment>
<feature type="chain" id="PRO_0000229651" description="NAD kinase">
    <location>
        <begin position="1"/>
        <end position="295"/>
    </location>
</feature>
<feature type="active site" description="Proton acceptor" evidence="1">
    <location>
        <position position="74"/>
    </location>
</feature>
<feature type="binding site" evidence="1">
    <location>
        <begin position="74"/>
        <end position="75"/>
    </location>
    <ligand>
        <name>NAD(+)</name>
        <dbReference type="ChEBI" id="CHEBI:57540"/>
    </ligand>
</feature>
<feature type="binding site" evidence="1">
    <location>
        <begin position="148"/>
        <end position="149"/>
    </location>
    <ligand>
        <name>NAD(+)</name>
        <dbReference type="ChEBI" id="CHEBI:57540"/>
    </ligand>
</feature>
<feature type="binding site" evidence="1">
    <location>
        <position position="159"/>
    </location>
    <ligand>
        <name>NAD(+)</name>
        <dbReference type="ChEBI" id="CHEBI:57540"/>
    </ligand>
</feature>
<feature type="binding site" evidence="1">
    <location>
        <position position="176"/>
    </location>
    <ligand>
        <name>NAD(+)</name>
        <dbReference type="ChEBI" id="CHEBI:57540"/>
    </ligand>
</feature>
<feature type="binding site" evidence="1">
    <location>
        <position position="178"/>
    </location>
    <ligand>
        <name>NAD(+)</name>
        <dbReference type="ChEBI" id="CHEBI:57540"/>
    </ligand>
</feature>
<feature type="binding site" evidence="1">
    <location>
        <begin position="189"/>
        <end position="194"/>
    </location>
    <ligand>
        <name>NAD(+)</name>
        <dbReference type="ChEBI" id="CHEBI:57540"/>
    </ligand>
</feature>
<sequence length="295" mass="33090">MKQKFKRAILYARQHRANQEVNESLHRLVDFLSTQDIEIFQDSDTAASFELKAPVLPREKMGAKHDLIIVVGGDGSLLSASRMAIKVNTPVIGINRGRLGFLTDILPQDIESHLGPVLNGQYNEEERFLLHTKIYDKENSYFEGDALNDVVLGRGSETHLIEFDVYINQQLVSHYRSDGMILSTPTGSTAYALSAGGPIMHPQLNAIVLVPMFSHSLSSRPLVIDGEAEIELYISKSNETDLRISCDGHESRVVKPGQKVAVKKNGNRLRLLHPLDYHYYDTLRSKLGWESKHQG</sequence>
<dbReference type="EC" id="2.7.1.23" evidence="1"/>
<dbReference type="EMBL" id="AE017354">
    <property type="protein sequence ID" value="AAU28871.1"/>
    <property type="molecule type" value="Genomic_DNA"/>
</dbReference>
<dbReference type="RefSeq" id="WP_010948510.1">
    <property type="nucleotide sequence ID" value="NC_002942.5"/>
</dbReference>
<dbReference type="RefSeq" id="YP_096818.1">
    <property type="nucleotide sequence ID" value="NC_002942.5"/>
</dbReference>
<dbReference type="SMR" id="Q5ZRQ7"/>
<dbReference type="STRING" id="272624.lpg2823"/>
<dbReference type="PaxDb" id="272624-lpg2823"/>
<dbReference type="KEGG" id="lpn:lpg2823"/>
<dbReference type="PATRIC" id="fig|272624.6.peg.3006"/>
<dbReference type="eggNOG" id="COG0061">
    <property type="taxonomic scope" value="Bacteria"/>
</dbReference>
<dbReference type="HOGENOM" id="CLU_008831_0_1_6"/>
<dbReference type="OrthoDB" id="9774737at2"/>
<dbReference type="Proteomes" id="UP000000609">
    <property type="component" value="Chromosome"/>
</dbReference>
<dbReference type="GO" id="GO:0005737">
    <property type="term" value="C:cytoplasm"/>
    <property type="evidence" value="ECO:0007669"/>
    <property type="project" value="UniProtKB-SubCell"/>
</dbReference>
<dbReference type="GO" id="GO:0005524">
    <property type="term" value="F:ATP binding"/>
    <property type="evidence" value="ECO:0007669"/>
    <property type="project" value="UniProtKB-KW"/>
</dbReference>
<dbReference type="GO" id="GO:0046872">
    <property type="term" value="F:metal ion binding"/>
    <property type="evidence" value="ECO:0007669"/>
    <property type="project" value="UniProtKB-UniRule"/>
</dbReference>
<dbReference type="GO" id="GO:0051287">
    <property type="term" value="F:NAD binding"/>
    <property type="evidence" value="ECO:0007669"/>
    <property type="project" value="UniProtKB-ARBA"/>
</dbReference>
<dbReference type="GO" id="GO:0003951">
    <property type="term" value="F:NAD+ kinase activity"/>
    <property type="evidence" value="ECO:0007669"/>
    <property type="project" value="UniProtKB-UniRule"/>
</dbReference>
<dbReference type="GO" id="GO:0019674">
    <property type="term" value="P:NAD metabolic process"/>
    <property type="evidence" value="ECO:0007669"/>
    <property type="project" value="InterPro"/>
</dbReference>
<dbReference type="GO" id="GO:0006741">
    <property type="term" value="P:NADP biosynthetic process"/>
    <property type="evidence" value="ECO:0007669"/>
    <property type="project" value="UniProtKB-UniRule"/>
</dbReference>
<dbReference type="FunFam" id="2.60.200.30:FF:000009">
    <property type="entry name" value="Poly(P)/ATP NAD kinase"/>
    <property type="match status" value="1"/>
</dbReference>
<dbReference type="Gene3D" id="3.40.50.10330">
    <property type="entry name" value="Probable inorganic polyphosphate/atp-NAD kinase, domain 1"/>
    <property type="match status" value="1"/>
</dbReference>
<dbReference type="Gene3D" id="2.60.200.30">
    <property type="entry name" value="Probable inorganic polyphosphate/atp-NAD kinase, domain 2"/>
    <property type="match status" value="1"/>
</dbReference>
<dbReference type="HAMAP" id="MF_00361">
    <property type="entry name" value="NAD_kinase"/>
    <property type="match status" value="1"/>
</dbReference>
<dbReference type="InterPro" id="IPR017438">
    <property type="entry name" value="ATP-NAD_kinase_N"/>
</dbReference>
<dbReference type="InterPro" id="IPR017437">
    <property type="entry name" value="ATP-NAD_kinase_PpnK-typ_C"/>
</dbReference>
<dbReference type="InterPro" id="IPR016064">
    <property type="entry name" value="NAD/diacylglycerol_kinase_sf"/>
</dbReference>
<dbReference type="InterPro" id="IPR002504">
    <property type="entry name" value="NADK"/>
</dbReference>
<dbReference type="NCBIfam" id="NF002306">
    <property type="entry name" value="PRK01231.1"/>
    <property type="match status" value="1"/>
</dbReference>
<dbReference type="PANTHER" id="PTHR20275">
    <property type="entry name" value="NAD KINASE"/>
    <property type="match status" value="1"/>
</dbReference>
<dbReference type="PANTHER" id="PTHR20275:SF0">
    <property type="entry name" value="NAD KINASE"/>
    <property type="match status" value="1"/>
</dbReference>
<dbReference type="Pfam" id="PF01513">
    <property type="entry name" value="NAD_kinase"/>
    <property type="match status" value="1"/>
</dbReference>
<dbReference type="Pfam" id="PF20143">
    <property type="entry name" value="NAD_kinase_C"/>
    <property type="match status" value="1"/>
</dbReference>
<dbReference type="SUPFAM" id="SSF111331">
    <property type="entry name" value="NAD kinase/diacylglycerol kinase-like"/>
    <property type="match status" value="1"/>
</dbReference>
<gene>
    <name evidence="1" type="primary">nadK</name>
    <name type="ordered locus">lpg2823</name>
</gene>
<reference key="1">
    <citation type="journal article" date="2004" name="Science">
        <title>The genomic sequence of the accidental pathogen Legionella pneumophila.</title>
        <authorList>
            <person name="Chien M."/>
            <person name="Morozova I."/>
            <person name="Shi S."/>
            <person name="Sheng H."/>
            <person name="Chen J."/>
            <person name="Gomez S.M."/>
            <person name="Asamani G."/>
            <person name="Hill K."/>
            <person name="Nuara J."/>
            <person name="Feder M."/>
            <person name="Rineer J."/>
            <person name="Greenberg J.J."/>
            <person name="Steshenko V."/>
            <person name="Park S.H."/>
            <person name="Zhao B."/>
            <person name="Teplitskaya E."/>
            <person name="Edwards J.R."/>
            <person name="Pampou S."/>
            <person name="Georghiou A."/>
            <person name="Chou I.-C."/>
            <person name="Iannuccilli W."/>
            <person name="Ulz M.E."/>
            <person name="Kim D.H."/>
            <person name="Geringer-Sameth A."/>
            <person name="Goldsberry C."/>
            <person name="Morozov P."/>
            <person name="Fischer S.G."/>
            <person name="Segal G."/>
            <person name="Qu X."/>
            <person name="Rzhetsky A."/>
            <person name="Zhang P."/>
            <person name="Cayanis E."/>
            <person name="De Jong P.J."/>
            <person name="Ju J."/>
            <person name="Kalachikov S."/>
            <person name="Shuman H.A."/>
            <person name="Russo J.J."/>
        </authorList>
    </citation>
    <scope>NUCLEOTIDE SEQUENCE [LARGE SCALE GENOMIC DNA]</scope>
    <source>
        <strain>Philadelphia 1 / ATCC 33152 / DSM 7513</strain>
    </source>
</reference>
<name>NADK_LEGPH</name>
<proteinExistence type="inferred from homology"/>
<evidence type="ECO:0000255" key="1">
    <source>
        <dbReference type="HAMAP-Rule" id="MF_00361"/>
    </source>
</evidence>
<keyword id="KW-0067">ATP-binding</keyword>
<keyword id="KW-0963">Cytoplasm</keyword>
<keyword id="KW-0418">Kinase</keyword>
<keyword id="KW-0520">NAD</keyword>
<keyword id="KW-0521">NADP</keyword>
<keyword id="KW-0547">Nucleotide-binding</keyword>
<keyword id="KW-1185">Reference proteome</keyword>
<keyword id="KW-0808">Transferase</keyword>